<proteinExistence type="inferred from homology"/>
<feature type="chain" id="PRO_1000196905" description="Thiazole synthase">
    <location>
        <begin position="1"/>
        <end position="264"/>
    </location>
</feature>
<feature type="active site" description="Schiff-base intermediate with DXP" evidence="1">
    <location>
        <position position="106"/>
    </location>
</feature>
<feature type="binding site" evidence="1">
    <location>
        <position position="167"/>
    </location>
    <ligand>
        <name>1-deoxy-D-xylulose 5-phosphate</name>
        <dbReference type="ChEBI" id="CHEBI:57792"/>
    </ligand>
</feature>
<feature type="binding site" evidence="1">
    <location>
        <begin position="193"/>
        <end position="194"/>
    </location>
    <ligand>
        <name>1-deoxy-D-xylulose 5-phosphate</name>
        <dbReference type="ChEBI" id="CHEBI:57792"/>
    </ligand>
</feature>
<feature type="binding site" evidence="1">
    <location>
        <begin position="215"/>
        <end position="216"/>
    </location>
    <ligand>
        <name>1-deoxy-D-xylulose 5-phosphate</name>
        <dbReference type="ChEBI" id="CHEBI:57792"/>
    </ligand>
</feature>
<organism>
    <name type="scientific">Stenotrophomonas maltophilia (strain K279a)</name>
    <dbReference type="NCBI Taxonomy" id="522373"/>
    <lineage>
        <taxon>Bacteria</taxon>
        <taxon>Pseudomonadati</taxon>
        <taxon>Pseudomonadota</taxon>
        <taxon>Gammaproteobacteria</taxon>
        <taxon>Lysobacterales</taxon>
        <taxon>Lysobacteraceae</taxon>
        <taxon>Stenotrophomonas</taxon>
        <taxon>Stenotrophomonas maltophilia group</taxon>
    </lineage>
</organism>
<comment type="function">
    <text evidence="1">Catalyzes the rearrangement of 1-deoxy-D-xylulose 5-phosphate (DXP) to produce the thiazole phosphate moiety of thiamine. Sulfur is provided by the thiocarboxylate moiety of the carrier protein ThiS. In vitro, sulfur can be provided by H(2)S.</text>
</comment>
<comment type="catalytic activity">
    <reaction evidence="1">
        <text>[ThiS sulfur-carrier protein]-C-terminal-Gly-aminoethanethioate + 2-iminoacetate + 1-deoxy-D-xylulose 5-phosphate = [ThiS sulfur-carrier protein]-C-terminal Gly-Gly + 2-[(2R,5Z)-2-carboxy-4-methylthiazol-5(2H)-ylidene]ethyl phosphate + 2 H2O + H(+)</text>
        <dbReference type="Rhea" id="RHEA:26297"/>
        <dbReference type="Rhea" id="RHEA-COMP:12909"/>
        <dbReference type="Rhea" id="RHEA-COMP:19908"/>
        <dbReference type="ChEBI" id="CHEBI:15377"/>
        <dbReference type="ChEBI" id="CHEBI:15378"/>
        <dbReference type="ChEBI" id="CHEBI:57792"/>
        <dbReference type="ChEBI" id="CHEBI:62899"/>
        <dbReference type="ChEBI" id="CHEBI:77846"/>
        <dbReference type="ChEBI" id="CHEBI:90778"/>
        <dbReference type="ChEBI" id="CHEBI:232372"/>
        <dbReference type="EC" id="2.8.1.10"/>
    </reaction>
</comment>
<comment type="pathway">
    <text evidence="1">Cofactor biosynthesis; thiamine diphosphate biosynthesis.</text>
</comment>
<comment type="subunit">
    <text evidence="1">Homotetramer. Forms heterodimers with either ThiH or ThiS.</text>
</comment>
<comment type="subcellular location">
    <subcellularLocation>
        <location evidence="1">Cytoplasm</location>
    </subcellularLocation>
</comment>
<comment type="similarity">
    <text evidence="1">Belongs to the ThiG family.</text>
</comment>
<dbReference type="EC" id="2.8.1.10" evidence="1"/>
<dbReference type="EMBL" id="AM743169">
    <property type="protein sequence ID" value="CAQ47184.1"/>
    <property type="molecule type" value="Genomic_DNA"/>
</dbReference>
<dbReference type="RefSeq" id="WP_005410813.1">
    <property type="nucleotide sequence ID" value="NC_010943.1"/>
</dbReference>
<dbReference type="SMR" id="B2FSD0"/>
<dbReference type="EnsemblBacteria" id="CAQ47184">
    <property type="protein sequence ID" value="CAQ47184"/>
    <property type="gene ID" value="Smlt3775"/>
</dbReference>
<dbReference type="KEGG" id="sml:Smlt3775"/>
<dbReference type="eggNOG" id="COG2022">
    <property type="taxonomic scope" value="Bacteria"/>
</dbReference>
<dbReference type="HOGENOM" id="CLU_062233_1_0_6"/>
<dbReference type="UniPathway" id="UPA00060"/>
<dbReference type="Proteomes" id="UP000008840">
    <property type="component" value="Chromosome"/>
</dbReference>
<dbReference type="GO" id="GO:0005737">
    <property type="term" value="C:cytoplasm"/>
    <property type="evidence" value="ECO:0007669"/>
    <property type="project" value="UniProtKB-SubCell"/>
</dbReference>
<dbReference type="GO" id="GO:1990107">
    <property type="term" value="F:thiazole synthase activity"/>
    <property type="evidence" value="ECO:0007669"/>
    <property type="project" value="UniProtKB-EC"/>
</dbReference>
<dbReference type="GO" id="GO:0009229">
    <property type="term" value="P:thiamine diphosphate biosynthetic process"/>
    <property type="evidence" value="ECO:0007669"/>
    <property type="project" value="UniProtKB-UniRule"/>
</dbReference>
<dbReference type="CDD" id="cd04728">
    <property type="entry name" value="ThiG"/>
    <property type="match status" value="1"/>
</dbReference>
<dbReference type="FunFam" id="3.20.20.70:FF:000049">
    <property type="entry name" value="Thiazole synthase"/>
    <property type="match status" value="1"/>
</dbReference>
<dbReference type="Gene3D" id="3.20.20.70">
    <property type="entry name" value="Aldolase class I"/>
    <property type="match status" value="1"/>
</dbReference>
<dbReference type="HAMAP" id="MF_00443">
    <property type="entry name" value="ThiG"/>
    <property type="match status" value="1"/>
</dbReference>
<dbReference type="InterPro" id="IPR013785">
    <property type="entry name" value="Aldolase_TIM"/>
</dbReference>
<dbReference type="InterPro" id="IPR033983">
    <property type="entry name" value="Thiazole_synthase_ThiG"/>
</dbReference>
<dbReference type="InterPro" id="IPR008867">
    <property type="entry name" value="ThiG"/>
</dbReference>
<dbReference type="PANTHER" id="PTHR34266">
    <property type="entry name" value="THIAZOLE SYNTHASE"/>
    <property type="match status" value="1"/>
</dbReference>
<dbReference type="PANTHER" id="PTHR34266:SF2">
    <property type="entry name" value="THIAZOLE SYNTHASE"/>
    <property type="match status" value="1"/>
</dbReference>
<dbReference type="Pfam" id="PF05690">
    <property type="entry name" value="ThiG"/>
    <property type="match status" value="1"/>
</dbReference>
<dbReference type="SUPFAM" id="SSF110399">
    <property type="entry name" value="ThiG-like"/>
    <property type="match status" value="1"/>
</dbReference>
<sequence>MNVHVSPDSLVIAGKTYGSRLLTGTGKFKDLEETRLATEAAGAQIVTVAIRRTNIGQNPGEPNLLDVLPPERYTILPNTAGCYTAEDAVRTCRLARELLDGHNLTKLEVLGDQKSLYPDVVQTLKAAEQLVKDGFEVMVYTSDDPILAKRLEEIGCAAVMPLAAPIGSGLGIQNKYNLLQIIEDAKVPIIVDAGVGTASDAAIAMELGCDGVLMNTAIAGARHPVLMASAMRKAVEAGREAFLAGRIPRKRYASASSPVDGLIG</sequence>
<name>THIG_STRMK</name>
<evidence type="ECO:0000255" key="1">
    <source>
        <dbReference type="HAMAP-Rule" id="MF_00443"/>
    </source>
</evidence>
<protein>
    <recommendedName>
        <fullName evidence="1">Thiazole synthase</fullName>
        <ecNumber evidence="1">2.8.1.10</ecNumber>
    </recommendedName>
</protein>
<reference key="1">
    <citation type="journal article" date="2008" name="Genome Biol.">
        <title>The complete genome, comparative and functional analysis of Stenotrophomonas maltophilia reveals an organism heavily shielded by drug resistance determinants.</title>
        <authorList>
            <person name="Crossman L.C."/>
            <person name="Gould V.C."/>
            <person name="Dow J.M."/>
            <person name="Vernikos G.S."/>
            <person name="Okazaki A."/>
            <person name="Sebaihia M."/>
            <person name="Saunders D."/>
            <person name="Arrowsmith C."/>
            <person name="Carver T."/>
            <person name="Peters N."/>
            <person name="Adlem E."/>
            <person name="Kerhornou A."/>
            <person name="Lord A."/>
            <person name="Murphy L."/>
            <person name="Seeger K."/>
            <person name="Squares R."/>
            <person name="Rutter S."/>
            <person name="Quail M.A."/>
            <person name="Rajandream M.A."/>
            <person name="Harris D."/>
            <person name="Churcher C."/>
            <person name="Bentley S.D."/>
            <person name="Parkhill J."/>
            <person name="Thomson N.R."/>
            <person name="Avison M.B."/>
        </authorList>
    </citation>
    <scope>NUCLEOTIDE SEQUENCE [LARGE SCALE GENOMIC DNA]</scope>
    <source>
        <strain>K279a</strain>
    </source>
</reference>
<accession>B2FSD0</accession>
<keyword id="KW-0963">Cytoplasm</keyword>
<keyword id="KW-1185">Reference proteome</keyword>
<keyword id="KW-0704">Schiff base</keyword>
<keyword id="KW-0784">Thiamine biosynthesis</keyword>
<keyword id="KW-0808">Transferase</keyword>
<gene>
    <name evidence="1" type="primary">thiG</name>
    <name type="ordered locus">Smlt3775</name>
</gene>